<accession>P63561</accession>
<accession>Q99X39</accession>
<reference key="1">
    <citation type="journal article" date="2002" name="Lancet">
        <title>Genome and virulence determinants of high virulence community-acquired MRSA.</title>
        <authorList>
            <person name="Baba T."/>
            <person name="Takeuchi F."/>
            <person name="Kuroda M."/>
            <person name="Yuzawa H."/>
            <person name="Aoki K."/>
            <person name="Oguchi A."/>
            <person name="Nagai Y."/>
            <person name="Iwama N."/>
            <person name="Asano K."/>
            <person name="Naimi T."/>
            <person name="Kuroda H."/>
            <person name="Cui L."/>
            <person name="Yamamoto K."/>
            <person name="Hiramatsu K."/>
        </authorList>
    </citation>
    <scope>NUCLEOTIDE SEQUENCE [LARGE SCALE GENOMIC DNA]</scope>
    <source>
        <strain>MW2</strain>
    </source>
</reference>
<feature type="chain" id="PRO_0000112667" description="Acetylglutamate kinase">
    <location>
        <begin position="1"/>
        <end position="254"/>
    </location>
</feature>
<feature type="binding site" evidence="1">
    <location>
        <begin position="40"/>
        <end position="41"/>
    </location>
    <ligand>
        <name>substrate</name>
    </ligand>
</feature>
<feature type="binding site" evidence="1">
    <location>
        <position position="62"/>
    </location>
    <ligand>
        <name>substrate</name>
    </ligand>
</feature>
<feature type="binding site" evidence="1">
    <location>
        <position position="154"/>
    </location>
    <ligand>
        <name>substrate</name>
    </ligand>
</feature>
<feature type="site" description="Transition state stabilizer" evidence="1">
    <location>
        <position position="7"/>
    </location>
</feature>
<feature type="site" description="Transition state stabilizer" evidence="1">
    <location>
        <position position="212"/>
    </location>
</feature>
<comment type="function">
    <text evidence="1">Catalyzes the ATP-dependent phosphorylation of N-acetyl-L-glutamate.</text>
</comment>
<comment type="catalytic activity">
    <reaction evidence="1">
        <text>N-acetyl-L-glutamate + ATP = N-acetyl-L-glutamyl 5-phosphate + ADP</text>
        <dbReference type="Rhea" id="RHEA:14629"/>
        <dbReference type="ChEBI" id="CHEBI:30616"/>
        <dbReference type="ChEBI" id="CHEBI:44337"/>
        <dbReference type="ChEBI" id="CHEBI:57936"/>
        <dbReference type="ChEBI" id="CHEBI:456216"/>
        <dbReference type="EC" id="2.7.2.8"/>
    </reaction>
</comment>
<comment type="pathway">
    <text evidence="1">Amino-acid biosynthesis; L-arginine biosynthesis; N(2)-acetyl-L-ornithine from L-glutamate: step 2/4.</text>
</comment>
<comment type="subcellular location">
    <subcellularLocation>
        <location evidence="1">Cytoplasm</location>
    </subcellularLocation>
</comment>
<comment type="similarity">
    <text evidence="1">Belongs to the acetylglutamate kinase family. ArgB subfamily.</text>
</comment>
<sequence length="254" mass="27739">MKFIVIKIGGSTLSDMHPSIINNIKHLRSNNIYPIIVHGGGPFINEALSNQQIEPHFVNGLRVTDKATMTITKHTLIADVNTALVAQFNQHQCSAIGLCGLDAQLFEITSFDQQYGYVGVPTALNKDALQYLCTKFVPIINSIGFNNHDGEFYNINADTLAYFIASSLKAPIYVLSNIAGVLINDVVIPQLPLVDIHQYIEHGDIYGGMIPKVLDAKNAIENGCPKVIIASGNKPNIIESIYNNDFVGTTILNS</sequence>
<proteinExistence type="inferred from homology"/>
<evidence type="ECO:0000255" key="1">
    <source>
        <dbReference type="HAMAP-Rule" id="MF_00082"/>
    </source>
</evidence>
<organism>
    <name type="scientific">Staphylococcus aureus (strain MW2)</name>
    <dbReference type="NCBI Taxonomy" id="196620"/>
    <lineage>
        <taxon>Bacteria</taxon>
        <taxon>Bacillati</taxon>
        <taxon>Bacillota</taxon>
        <taxon>Bacilli</taxon>
        <taxon>Bacillales</taxon>
        <taxon>Staphylococcaceae</taxon>
        <taxon>Staphylococcus</taxon>
    </lineage>
</organism>
<protein>
    <recommendedName>
        <fullName evidence="1">Acetylglutamate kinase</fullName>
        <ecNumber evidence="1">2.7.2.8</ecNumber>
    </recommendedName>
    <alternativeName>
        <fullName evidence="1">N-acetyl-L-glutamate 5-phosphotransferase</fullName>
    </alternativeName>
    <alternativeName>
        <fullName evidence="1">NAG kinase</fullName>
        <shortName evidence="1">NAGK</shortName>
    </alternativeName>
</protein>
<name>ARGB_STAAW</name>
<dbReference type="EC" id="2.7.2.8" evidence="1"/>
<dbReference type="EMBL" id="BA000033">
    <property type="protein sequence ID" value="BAB94021.1"/>
    <property type="molecule type" value="Genomic_DNA"/>
</dbReference>
<dbReference type="RefSeq" id="WP_000668894.1">
    <property type="nucleotide sequence ID" value="NC_003923.1"/>
</dbReference>
<dbReference type="SMR" id="P63561"/>
<dbReference type="KEGG" id="sam:MW0156"/>
<dbReference type="HOGENOM" id="CLU_053680_1_0_9"/>
<dbReference type="UniPathway" id="UPA00068">
    <property type="reaction ID" value="UER00107"/>
</dbReference>
<dbReference type="GO" id="GO:0005737">
    <property type="term" value="C:cytoplasm"/>
    <property type="evidence" value="ECO:0007669"/>
    <property type="project" value="UniProtKB-SubCell"/>
</dbReference>
<dbReference type="GO" id="GO:0003991">
    <property type="term" value="F:acetylglutamate kinase activity"/>
    <property type="evidence" value="ECO:0007669"/>
    <property type="project" value="UniProtKB-UniRule"/>
</dbReference>
<dbReference type="GO" id="GO:0005524">
    <property type="term" value="F:ATP binding"/>
    <property type="evidence" value="ECO:0007669"/>
    <property type="project" value="UniProtKB-UniRule"/>
</dbReference>
<dbReference type="GO" id="GO:0042450">
    <property type="term" value="P:arginine biosynthetic process via ornithine"/>
    <property type="evidence" value="ECO:0007669"/>
    <property type="project" value="UniProtKB-UniRule"/>
</dbReference>
<dbReference type="GO" id="GO:0006526">
    <property type="term" value="P:L-arginine biosynthetic process"/>
    <property type="evidence" value="ECO:0007669"/>
    <property type="project" value="UniProtKB-UniPathway"/>
</dbReference>
<dbReference type="CDD" id="cd04238">
    <property type="entry name" value="AAK_NAGK-like"/>
    <property type="match status" value="1"/>
</dbReference>
<dbReference type="FunFam" id="3.40.1160.10:FF:000037">
    <property type="entry name" value="Acetylglutamate kinase"/>
    <property type="match status" value="1"/>
</dbReference>
<dbReference type="Gene3D" id="3.40.1160.10">
    <property type="entry name" value="Acetylglutamate kinase-like"/>
    <property type="match status" value="1"/>
</dbReference>
<dbReference type="HAMAP" id="MF_00082">
    <property type="entry name" value="ArgB"/>
    <property type="match status" value="1"/>
</dbReference>
<dbReference type="InterPro" id="IPR036393">
    <property type="entry name" value="AceGlu_kinase-like_sf"/>
</dbReference>
<dbReference type="InterPro" id="IPR004662">
    <property type="entry name" value="AcgluKinase_fam"/>
</dbReference>
<dbReference type="InterPro" id="IPR037528">
    <property type="entry name" value="ArgB"/>
</dbReference>
<dbReference type="InterPro" id="IPR001048">
    <property type="entry name" value="Asp/Glu/Uridylate_kinase"/>
</dbReference>
<dbReference type="NCBIfam" id="TIGR00761">
    <property type="entry name" value="argB"/>
    <property type="match status" value="1"/>
</dbReference>
<dbReference type="PANTHER" id="PTHR23342">
    <property type="entry name" value="N-ACETYLGLUTAMATE SYNTHASE"/>
    <property type="match status" value="1"/>
</dbReference>
<dbReference type="PANTHER" id="PTHR23342:SF0">
    <property type="entry name" value="N-ACETYLGLUTAMATE SYNTHASE, MITOCHONDRIAL"/>
    <property type="match status" value="1"/>
</dbReference>
<dbReference type="Pfam" id="PF00696">
    <property type="entry name" value="AA_kinase"/>
    <property type="match status" value="1"/>
</dbReference>
<dbReference type="PIRSF" id="PIRSF000728">
    <property type="entry name" value="NAGK"/>
    <property type="match status" value="1"/>
</dbReference>
<dbReference type="SUPFAM" id="SSF53633">
    <property type="entry name" value="Carbamate kinase-like"/>
    <property type="match status" value="1"/>
</dbReference>
<keyword id="KW-0028">Amino-acid biosynthesis</keyword>
<keyword id="KW-0055">Arginine biosynthesis</keyword>
<keyword id="KW-0067">ATP-binding</keyword>
<keyword id="KW-0963">Cytoplasm</keyword>
<keyword id="KW-0418">Kinase</keyword>
<keyword id="KW-0547">Nucleotide-binding</keyword>
<keyword id="KW-0808">Transferase</keyword>
<gene>
    <name evidence="1" type="primary">argB</name>
    <name type="ordered locus">MW0156</name>
</gene>